<dbReference type="EMBL" id="AM420293">
    <property type="protein sequence ID" value="CAM04881.1"/>
    <property type="molecule type" value="Genomic_DNA"/>
</dbReference>
<dbReference type="RefSeq" id="WP_009948215.1">
    <property type="nucleotide sequence ID" value="NC_009142.1"/>
</dbReference>
<dbReference type="SMR" id="A4FLF6"/>
<dbReference type="STRING" id="405948.SACE_5696"/>
<dbReference type="KEGG" id="sen:SACE_5696"/>
<dbReference type="eggNOG" id="COG5441">
    <property type="taxonomic scope" value="Bacteria"/>
</dbReference>
<dbReference type="HOGENOM" id="CLU_036813_1_0_11"/>
<dbReference type="OrthoDB" id="9776369at2"/>
<dbReference type="Proteomes" id="UP000006728">
    <property type="component" value="Chromosome"/>
</dbReference>
<dbReference type="CDD" id="cd15488">
    <property type="entry name" value="Tm-1-like"/>
    <property type="match status" value="1"/>
</dbReference>
<dbReference type="Gene3D" id="3.40.50.12030">
    <property type="entry name" value="Uncharacterised protein family UPF0261, NC domain"/>
    <property type="match status" value="1"/>
</dbReference>
<dbReference type="Gene3D" id="3.40.50.12020">
    <property type="entry name" value="Uncharacterised protein family UPF0261, NN domain"/>
    <property type="match status" value="1"/>
</dbReference>
<dbReference type="HAMAP" id="MF_00677">
    <property type="entry name" value="UPF0261"/>
    <property type="match status" value="1"/>
</dbReference>
<dbReference type="InterPro" id="IPR051353">
    <property type="entry name" value="Tobamovirus_resist_UPF0261"/>
</dbReference>
<dbReference type="InterPro" id="IPR008322">
    <property type="entry name" value="UPF0261"/>
</dbReference>
<dbReference type="InterPro" id="IPR056778">
    <property type="entry name" value="UPF0261_C"/>
</dbReference>
<dbReference type="InterPro" id="IPR044122">
    <property type="entry name" value="UPF0261_N"/>
</dbReference>
<dbReference type="NCBIfam" id="NF002673">
    <property type="entry name" value="PRK02399.1-1"/>
    <property type="match status" value="1"/>
</dbReference>
<dbReference type="NCBIfam" id="NF002674">
    <property type="entry name" value="PRK02399.1-2"/>
    <property type="match status" value="1"/>
</dbReference>
<dbReference type="PANTHER" id="PTHR31862">
    <property type="entry name" value="UPF0261 DOMAIN PROTEIN (AFU_ORTHOLOGUE AFUA_1G10120)"/>
    <property type="match status" value="1"/>
</dbReference>
<dbReference type="PANTHER" id="PTHR31862:SF1">
    <property type="entry name" value="UPF0261 DOMAIN PROTEIN (AFU_ORTHOLOGUE AFUA_1G10120)"/>
    <property type="match status" value="1"/>
</dbReference>
<dbReference type="Pfam" id="PF06792">
    <property type="entry name" value="UPF0261"/>
    <property type="match status" value="1"/>
</dbReference>
<dbReference type="Pfam" id="PF23189">
    <property type="entry name" value="UPF0261_C"/>
    <property type="match status" value="1"/>
</dbReference>
<dbReference type="PIRSF" id="PIRSF033271">
    <property type="entry name" value="UCP033271"/>
    <property type="match status" value="1"/>
</dbReference>
<evidence type="ECO:0000255" key="1">
    <source>
        <dbReference type="HAMAP-Rule" id="MF_00677"/>
    </source>
</evidence>
<accession>A4FLF6</accession>
<feature type="chain" id="PRO_1000044822" description="UPF0261 protein SACE_5696">
    <location>
        <begin position="1"/>
        <end position="411"/>
    </location>
</feature>
<protein>
    <recommendedName>
        <fullName evidence="1">UPF0261 protein SACE_5696</fullName>
    </recommendedName>
</protein>
<proteinExistence type="inferred from homology"/>
<name>Y5696_SACEN</name>
<reference key="1">
    <citation type="journal article" date="2007" name="Nat. Biotechnol.">
        <title>Complete genome sequence of the erythromycin-producing bacterium Saccharopolyspora erythraea NRRL23338.</title>
        <authorList>
            <person name="Oliynyk M."/>
            <person name="Samborskyy M."/>
            <person name="Lester J.B."/>
            <person name="Mironenko T."/>
            <person name="Scott N."/>
            <person name="Dickens S."/>
            <person name="Haydock S.F."/>
            <person name="Leadlay P.F."/>
        </authorList>
    </citation>
    <scope>NUCLEOTIDE SEQUENCE [LARGE SCALE GENOMIC DNA]</scope>
    <source>
        <strain>ATCC 11635 / DSM 40517 / JCM 4748 / NBRC 13426 / NCIMB 8594 / NRRL 2338</strain>
    </source>
</reference>
<comment type="similarity">
    <text evidence="1">Belongs to the UPF0261 family.</text>
</comment>
<organism>
    <name type="scientific">Saccharopolyspora erythraea (strain ATCC 11635 / DSM 40517 / JCM 4748 / NBRC 13426 / NCIMB 8594 / NRRL 2338)</name>
    <dbReference type="NCBI Taxonomy" id="405948"/>
    <lineage>
        <taxon>Bacteria</taxon>
        <taxon>Bacillati</taxon>
        <taxon>Actinomycetota</taxon>
        <taxon>Actinomycetes</taxon>
        <taxon>Pseudonocardiales</taxon>
        <taxon>Pseudonocardiaceae</taxon>
        <taxon>Saccharopolyspora</taxon>
    </lineage>
</organism>
<gene>
    <name type="ordered locus">SACE_5696</name>
</gene>
<keyword id="KW-1185">Reference proteome</keyword>
<sequence>MDTAYVVGTFDTKGAELGYVAGLVAARGVPVVTVDVSTSGPETGTADARPADVGNVEVAGHHPDGAAAVFTGDRGTAVTAMAVALERFLAGRAVGGVIALGGSGGTALCTPAMRALPVGVPKVMVSTVASGDVSSYVDATDIAMFPSVTDVAGLNRISRRVLGNAAHALAGAMTGDIASTEDKPAVALTMFGVTTPCVTEVASRLEARYDPLVFHATGTGGRAMEKLVDDGLIGAVLDLTTTEVCDLVAGGVMSAGEGRLDAIARTGVPYVGSCGALDMVNFGAFETVPERYRDRNLYVHNPQVTLMRTTPDECREIGSFIAAKLNACRGPVRFLLPEGGVSLLDAPGQPFHDPDADGVLFEVLESELRQDGDRRIVRVPHNINDPAFADAVLTAFEEVLGAGTIQEGQRE</sequence>